<gene>
    <name type="primary">RFTN2</name>
    <name type="synonym">C2orf11</name>
</gene>
<protein>
    <recommendedName>
        <fullName>Raftlin-2</fullName>
    </recommendedName>
    <alternativeName>
        <fullName>Raft-linking protein 2</fullName>
    </alternativeName>
</protein>
<reference key="1">
    <citation type="journal article" date="2004" name="Nat. Genet.">
        <title>Complete sequencing and characterization of 21,243 full-length human cDNAs.</title>
        <authorList>
            <person name="Ota T."/>
            <person name="Suzuki Y."/>
            <person name="Nishikawa T."/>
            <person name="Otsuki T."/>
            <person name="Sugiyama T."/>
            <person name="Irie R."/>
            <person name="Wakamatsu A."/>
            <person name="Hayashi K."/>
            <person name="Sato H."/>
            <person name="Nagai K."/>
            <person name="Kimura K."/>
            <person name="Makita H."/>
            <person name="Sekine M."/>
            <person name="Obayashi M."/>
            <person name="Nishi T."/>
            <person name="Shibahara T."/>
            <person name="Tanaka T."/>
            <person name="Ishii S."/>
            <person name="Yamamoto J."/>
            <person name="Saito K."/>
            <person name="Kawai Y."/>
            <person name="Isono Y."/>
            <person name="Nakamura Y."/>
            <person name="Nagahari K."/>
            <person name="Murakami K."/>
            <person name="Yasuda T."/>
            <person name="Iwayanagi T."/>
            <person name="Wagatsuma M."/>
            <person name="Shiratori A."/>
            <person name="Sudo H."/>
            <person name="Hosoiri T."/>
            <person name="Kaku Y."/>
            <person name="Kodaira H."/>
            <person name="Kondo H."/>
            <person name="Sugawara M."/>
            <person name="Takahashi M."/>
            <person name="Kanda K."/>
            <person name="Yokoi T."/>
            <person name="Furuya T."/>
            <person name="Kikkawa E."/>
            <person name="Omura Y."/>
            <person name="Abe K."/>
            <person name="Kamihara K."/>
            <person name="Katsuta N."/>
            <person name="Sato K."/>
            <person name="Tanikawa M."/>
            <person name="Yamazaki M."/>
            <person name="Ninomiya K."/>
            <person name="Ishibashi T."/>
            <person name="Yamashita H."/>
            <person name="Murakawa K."/>
            <person name="Fujimori K."/>
            <person name="Tanai H."/>
            <person name="Kimata M."/>
            <person name="Watanabe M."/>
            <person name="Hiraoka S."/>
            <person name="Chiba Y."/>
            <person name="Ishida S."/>
            <person name="Ono Y."/>
            <person name="Takiguchi S."/>
            <person name="Watanabe S."/>
            <person name="Yosida M."/>
            <person name="Hotuta T."/>
            <person name="Kusano J."/>
            <person name="Kanehori K."/>
            <person name="Takahashi-Fujii A."/>
            <person name="Hara H."/>
            <person name="Tanase T.-O."/>
            <person name="Nomura Y."/>
            <person name="Togiya S."/>
            <person name="Komai F."/>
            <person name="Hara R."/>
            <person name="Takeuchi K."/>
            <person name="Arita M."/>
            <person name="Imose N."/>
            <person name="Musashino K."/>
            <person name="Yuuki H."/>
            <person name="Oshima A."/>
            <person name="Sasaki N."/>
            <person name="Aotsuka S."/>
            <person name="Yoshikawa Y."/>
            <person name="Matsunawa H."/>
            <person name="Ichihara T."/>
            <person name="Shiohata N."/>
            <person name="Sano S."/>
            <person name="Moriya S."/>
            <person name="Momiyama H."/>
            <person name="Satoh N."/>
            <person name="Takami S."/>
            <person name="Terashima Y."/>
            <person name="Suzuki O."/>
            <person name="Nakagawa S."/>
            <person name="Senoh A."/>
            <person name="Mizoguchi H."/>
            <person name="Goto Y."/>
            <person name="Shimizu F."/>
            <person name="Wakebe H."/>
            <person name="Hishigaki H."/>
            <person name="Watanabe T."/>
            <person name="Sugiyama A."/>
            <person name="Takemoto M."/>
            <person name="Kawakami B."/>
            <person name="Yamazaki M."/>
            <person name="Watanabe K."/>
            <person name="Kumagai A."/>
            <person name="Itakura S."/>
            <person name="Fukuzumi Y."/>
            <person name="Fujimori Y."/>
            <person name="Komiyama M."/>
            <person name="Tashiro H."/>
            <person name="Tanigami A."/>
            <person name="Fujiwara T."/>
            <person name="Ono T."/>
            <person name="Yamada K."/>
            <person name="Fujii Y."/>
            <person name="Ozaki K."/>
            <person name="Hirao M."/>
            <person name="Ohmori Y."/>
            <person name="Kawabata A."/>
            <person name="Hikiji T."/>
            <person name="Kobatake N."/>
            <person name="Inagaki H."/>
            <person name="Ikema Y."/>
            <person name="Okamoto S."/>
            <person name="Okitani R."/>
            <person name="Kawakami T."/>
            <person name="Noguchi S."/>
            <person name="Itoh T."/>
            <person name="Shigeta K."/>
            <person name="Senba T."/>
            <person name="Matsumura K."/>
            <person name="Nakajima Y."/>
            <person name="Mizuno T."/>
            <person name="Morinaga M."/>
            <person name="Sasaki M."/>
            <person name="Togashi T."/>
            <person name="Oyama M."/>
            <person name="Hata H."/>
            <person name="Watanabe M."/>
            <person name="Komatsu T."/>
            <person name="Mizushima-Sugano J."/>
            <person name="Satoh T."/>
            <person name="Shirai Y."/>
            <person name="Takahashi Y."/>
            <person name="Nakagawa K."/>
            <person name="Okumura K."/>
            <person name="Nagase T."/>
            <person name="Nomura N."/>
            <person name="Kikuchi H."/>
            <person name="Masuho Y."/>
            <person name="Yamashita R."/>
            <person name="Nakai K."/>
            <person name="Yada T."/>
            <person name="Nakamura Y."/>
            <person name="Ohara O."/>
            <person name="Isogai T."/>
            <person name="Sugano S."/>
        </authorList>
    </citation>
    <scope>NUCLEOTIDE SEQUENCE [LARGE SCALE MRNA]</scope>
    <source>
        <tissue>Brain</tissue>
    </source>
</reference>
<reference key="2">
    <citation type="journal article" date="2005" name="Nature">
        <title>Generation and annotation of the DNA sequences of human chromosomes 2 and 4.</title>
        <authorList>
            <person name="Hillier L.W."/>
            <person name="Graves T.A."/>
            <person name="Fulton R.S."/>
            <person name="Fulton L.A."/>
            <person name="Pepin K.H."/>
            <person name="Minx P."/>
            <person name="Wagner-McPherson C."/>
            <person name="Layman D."/>
            <person name="Wylie K."/>
            <person name="Sekhon M."/>
            <person name="Becker M.C."/>
            <person name="Fewell G.A."/>
            <person name="Delehaunty K.D."/>
            <person name="Miner T.L."/>
            <person name="Nash W.E."/>
            <person name="Kremitzki C."/>
            <person name="Oddy L."/>
            <person name="Du H."/>
            <person name="Sun H."/>
            <person name="Bradshaw-Cordum H."/>
            <person name="Ali J."/>
            <person name="Carter J."/>
            <person name="Cordes M."/>
            <person name="Harris A."/>
            <person name="Isak A."/>
            <person name="van Brunt A."/>
            <person name="Nguyen C."/>
            <person name="Du F."/>
            <person name="Courtney L."/>
            <person name="Kalicki J."/>
            <person name="Ozersky P."/>
            <person name="Abbott S."/>
            <person name="Armstrong J."/>
            <person name="Belter E.A."/>
            <person name="Caruso L."/>
            <person name="Cedroni M."/>
            <person name="Cotton M."/>
            <person name="Davidson T."/>
            <person name="Desai A."/>
            <person name="Elliott G."/>
            <person name="Erb T."/>
            <person name="Fronick C."/>
            <person name="Gaige T."/>
            <person name="Haakenson W."/>
            <person name="Haglund K."/>
            <person name="Holmes A."/>
            <person name="Harkins R."/>
            <person name="Kim K."/>
            <person name="Kruchowski S.S."/>
            <person name="Strong C.M."/>
            <person name="Grewal N."/>
            <person name="Goyea E."/>
            <person name="Hou S."/>
            <person name="Levy A."/>
            <person name="Martinka S."/>
            <person name="Mead K."/>
            <person name="McLellan M.D."/>
            <person name="Meyer R."/>
            <person name="Randall-Maher J."/>
            <person name="Tomlinson C."/>
            <person name="Dauphin-Kohlberg S."/>
            <person name="Kozlowicz-Reilly A."/>
            <person name="Shah N."/>
            <person name="Swearengen-Shahid S."/>
            <person name="Snider J."/>
            <person name="Strong J.T."/>
            <person name="Thompson J."/>
            <person name="Yoakum M."/>
            <person name="Leonard S."/>
            <person name="Pearman C."/>
            <person name="Trani L."/>
            <person name="Radionenko M."/>
            <person name="Waligorski J.E."/>
            <person name="Wang C."/>
            <person name="Rock S.M."/>
            <person name="Tin-Wollam A.-M."/>
            <person name="Maupin R."/>
            <person name="Latreille P."/>
            <person name="Wendl M.C."/>
            <person name="Yang S.-P."/>
            <person name="Pohl C."/>
            <person name="Wallis J.W."/>
            <person name="Spieth J."/>
            <person name="Bieri T.A."/>
            <person name="Berkowicz N."/>
            <person name="Nelson J.O."/>
            <person name="Osborne J."/>
            <person name="Ding L."/>
            <person name="Meyer R."/>
            <person name="Sabo A."/>
            <person name="Shotland Y."/>
            <person name="Sinha P."/>
            <person name="Wohldmann P.E."/>
            <person name="Cook L.L."/>
            <person name="Hickenbotham M.T."/>
            <person name="Eldred J."/>
            <person name="Williams D."/>
            <person name="Jones T.A."/>
            <person name="She X."/>
            <person name="Ciccarelli F.D."/>
            <person name="Izaurralde E."/>
            <person name="Taylor J."/>
            <person name="Schmutz J."/>
            <person name="Myers R.M."/>
            <person name="Cox D.R."/>
            <person name="Huang X."/>
            <person name="McPherson J.D."/>
            <person name="Mardis E.R."/>
            <person name="Clifton S.W."/>
            <person name="Warren W.C."/>
            <person name="Chinwalla A.T."/>
            <person name="Eddy S.R."/>
            <person name="Marra M.A."/>
            <person name="Ovcharenko I."/>
            <person name="Furey T.S."/>
            <person name="Miller W."/>
            <person name="Eichler E.E."/>
            <person name="Bork P."/>
            <person name="Suyama M."/>
            <person name="Torrents D."/>
            <person name="Waterston R.H."/>
            <person name="Wilson R.K."/>
        </authorList>
    </citation>
    <scope>NUCLEOTIDE SEQUENCE [LARGE SCALE GENOMIC DNA]</scope>
</reference>
<reference key="3">
    <citation type="submission" date="2005-07" db="EMBL/GenBank/DDBJ databases">
        <authorList>
            <person name="Mural R.J."/>
            <person name="Istrail S."/>
            <person name="Sutton G.G."/>
            <person name="Florea L."/>
            <person name="Halpern A.L."/>
            <person name="Mobarry C.M."/>
            <person name="Lippert R."/>
            <person name="Walenz B."/>
            <person name="Shatkay H."/>
            <person name="Dew I."/>
            <person name="Miller J.R."/>
            <person name="Flanigan M.J."/>
            <person name="Edwards N.J."/>
            <person name="Bolanos R."/>
            <person name="Fasulo D."/>
            <person name="Halldorsson B.V."/>
            <person name="Hannenhalli S."/>
            <person name="Turner R."/>
            <person name="Yooseph S."/>
            <person name="Lu F."/>
            <person name="Nusskern D.R."/>
            <person name="Shue B.C."/>
            <person name="Zheng X.H."/>
            <person name="Zhong F."/>
            <person name="Delcher A.L."/>
            <person name="Huson D.H."/>
            <person name="Kravitz S.A."/>
            <person name="Mouchard L."/>
            <person name="Reinert K."/>
            <person name="Remington K.A."/>
            <person name="Clark A.G."/>
            <person name="Waterman M.S."/>
            <person name="Eichler E.E."/>
            <person name="Adams M.D."/>
            <person name="Hunkapiller M.W."/>
            <person name="Myers E.W."/>
            <person name="Venter J.C."/>
        </authorList>
    </citation>
    <scope>NUCLEOTIDE SEQUENCE [LARGE SCALE GENOMIC DNA]</scope>
</reference>
<reference key="4">
    <citation type="journal article" date="2004" name="Genome Res.">
        <title>The status, quality, and expansion of the NIH full-length cDNA project: the Mammalian Gene Collection (MGC).</title>
        <authorList>
            <consortium name="The MGC Project Team"/>
        </authorList>
    </citation>
    <scope>NUCLEOTIDE SEQUENCE [LARGE SCALE MRNA]</scope>
    <source>
        <tissue>Brain</tissue>
    </source>
</reference>
<evidence type="ECO:0000250" key="1"/>
<evidence type="ECO:0000250" key="2">
    <source>
        <dbReference type="UniProtKB" id="Q14699"/>
    </source>
</evidence>
<evidence type="ECO:0000250" key="3">
    <source>
        <dbReference type="UniProtKB" id="Q8CHX7"/>
    </source>
</evidence>
<evidence type="ECO:0000256" key="4">
    <source>
        <dbReference type="SAM" id="MobiDB-lite"/>
    </source>
</evidence>
<evidence type="ECO:0000305" key="5"/>
<organism>
    <name type="scientific">Homo sapiens</name>
    <name type="common">Human</name>
    <dbReference type="NCBI Taxonomy" id="9606"/>
    <lineage>
        <taxon>Eukaryota</taxon>
        <taxon>Metazoa</taxon>
        <taxon>Chordata</taxon>
        <taxon>Craniata</taxon>
        <taxon>Vertebrata</taxon>
        <taxon>Euteleostomi</taxon>
        <taxon>Mammalia</taxon>
        <taxon>Eutheria</taxon>
        <taxon>Euarchontoglires</taxon>
        <taxon>Primates</taxon>
        <taxon>Haplorrhini</taxon>
        <taxon>Catarrhini</taxon>
        <taxon>Hominidae</taxon>
        <taxon>Homo</taxon>
    </lineage>
</organism>
<accession>Q52LD8</accession>
<accession>Q14DH4</accession>
<accession>Q2TA69</accession>
<accession>Q53QE0</accession>
<accession>Q53SE1</accession>
<accession>Q96NM3</accession>
<name>RFTN2_HUMAN</name>
<proteinExistence type="evidence at protein level"/>
<sequence>MGCGLRKLEDPDDSSPGKIFSTLKRPQVETKTEFAYEYVLLDFTLQASSNPEVIKINSILDIVTKVENYYLKGYIVGAIHPVIQPVGQRKHLPASYLYRVVLLRLKLSPKNSAAPSGQRRPRLVIEECPLTSEAQTNDAAKELIEKINVAAKRGMKFVGFISQHYSPSKFCNGTNHDGDIESMLHVRHGSDENCRSWNEGTLSGQSSESGIEEELHHESGQYQMEQNGSPTSSKSRKGEASDNKLYTVFNAFDDDSTSWAYQEGILSMKVTRKGSVISTLDADWLELTTFYYKQGLSLIDSFVFWETSKGEHLPKSLEGFFIYEEEGSGVPGSSRKGNDAIVVEQWTVIEGCEIKTDYGPLLHTLAEFGWLLTSVLPTPVLRHDSEGNLATKQIVFLQRPVMWNSAAQTPDKKASRHIKGEDKNKATSRSIGLDTTSSQPAESRHLPEECRLSPSRECWTKEGRLAQHNSFSGFSSSDNVLRELDDGQFDQEDGVTQVTCM</sequence>
<comment type="function">
    <text evidence="3">Upon bacterial lipopolysaccharide stimulation, mediates clathrin-dependent internalization of TLR4 in dendritic cells, resulting in activation of TICAM1-mediated signaling and subsequent IFNB1 production. May regulate B-cell antigen receptor-mediated signaling.</text>
</comment>
<comment type="interaction">
    <interactant intactId="EBI-12278276">
        <id>Q52LD8</id>
    </interactant>
    <interactant intactId="EBI-16439278">
        <id>Q6FHY5</id>
        <label>MEOX2</label>
    </interactant>
    <organismsDiffer>false</organismsDiffer>
    <experiments>3</experiments>
</comment>
<comment type="subcellular location">
    <subcellularLocation>
        <location evidence="2">Cell membrane</location>
        <topology evidence="2">Lipid-anchor</topology>
    </subcellularLocation>
</comment>
<comment type="similarity">
    <text evidence="5">Belongs to the raftlin family.</text>
</comment>
<dbReference type="EMBL" id="AK055136">
    <property type="protein sequence ID" value="BAB70861.1"/>
    <property type="molecule type" value="mRNA"/>
</dbReference>
<dbReference type="EMBL" id="AC020550">
    <property type="protein sequence ID" value="AAX93148.1"/>
    <property type="molecule type" value="Genomic_DNA"/>
</dbReference>
<dbReference type="EMBL" id="AC114800">
    <property type="protein sequence ID" value="AAY24079.1"/>
    <property type="molecule type" value="Genomic_DNA"/>
</dbReference>
<dbReference type="EMBL" id="CH471063">
    <property type="protein sequence ID" value="EAW70169.1"/>
    <property type="molecule type" value="Genomic_DNA"/>
</dbReference>
<dbReference type="EMBL" id="BC093966">
    <property type="protein sequence ID" value="AAH93966.1"/>
    <property type="molecule type" value="mRNA"/>
</dbReference>
<dbReference type="EMBL" id="BC111069">
    <property type="protein sequence ID" value="AAI11070.1"/>
    <property type="molecule type" value="mRNA"/>
</dbReference>
<dbReference type="EMBL" id="BC113361">
    <property type="protein sequence ID" value="AAI13362.1"/>
    <property type="molecule type" value="mRNA"/>
</dbReference>
<dbReference type="CCDS" id="CCDS2323.1"/>
<dbReference type="RefSeq" id="NP_653230.2">
    <property type="nucleotide sequence ID" value="NM_144629.3"/>
</dbReference>
<dbReference type="SMR" id="Q52LD8"/>
<dbReference type="BioGRID" id="126225">
    <property type="interactions" value="13"/>
</dbReference>
<dbReference type="FunCoup" id="Q52LD8">
    <property type="interactions" value="34"/>
</dbReference>
<dbReference type="IntAct" id="Q52LD8">
    <property type="interactions" value="10"/>
</dbReference>
<dbReference type="STRING" id="9606.ENSP00000295049"/>
<dbReference type="GlyGen" id="Q52LD8">
    <property type="glycosylation" value="1 site"/>
</dbReference>
<dbReference type="iPTMnet" id="Q52LD8"/>
<dbReference type="PhosphoSitePlus" id="Q52LD8"/>
<dbReference type="SwissPalm" id="Q52LD8"/>
<dbReference type="BioMuta" id="RFTN2"/>
<dbReference type="DMDM" id="134047878"/>
<dbReference type="jPOST" id="Q52LD8"/>
<dbReference type="MassIVE" id="Q52LD8"/>
<dbReference type="PaxDb" id="9606-ENSP00000295049"/>
<dbReference type="PeptideAtlas" id="Q52LD8"/>
<dbReference type="ProteomicsDB" id="62422"/>
<dbReference type="Antibodypedia" id="34069">
    <property type="antibodies" value="123 antibodies from 24 providers"/>
</dbReference>
<dbReference type="DNASU" id="130132"/>
<dbReference type="Ensembl" id="ENST00000295049.9">
    <property type="protein sequence ID" value="ENSP00000295049.3"/>
    <property type="gene ID" value="ENSG00000162944.11"/>
</dbReference>
<dbReference type="GeneID" id="130132"/>
<dbReference type="KEGG" id="hsa:130132"/>
<dbReference type="MANE-Select" id="ENST00000295049.9">
    <property type="protein sequence ID" value="ENSP00000295049.3"/>
    <property type="RefSeq nucleotide sequence ID" value="NM_144629.3"/>
    <property type="RefSeq protein sequence ID" value="NP_653230.2"/>
</dbReference>
<dbReference type="UCSC" id="uc002uuo.5">
    <property type="organism name" value="human"/>
</dbReference>
<dbReference type="AGR" id="HGNC:26402"/>
<dbReference type="CTD" id="130132"/>
<dbReference type="DisGeNET" id="130132"/>
<dbReference type="GeneCards" id="RFTN2"/>
<dbReference type="HGNC" id="HGNC:26402">
    <property type="gene designation" value="RFTN2"/>
</dbReference>
<dbReference type="HPA" id="ENSG00000162944">
    <property type="expression patterns" value="Tissue enhanced (brain)"/>
</dbReference>
<dbReference type="MIM" id="618215">
    <property type="type" value="gene"/>
</dbReference>
<dbReference type="neXtProt" id="NX_Q52LD8"/>
<dbReference type="OpenTargets" id="ENSG00000162944"/>
<dbReference type="PharmGKB" id="PA162401231"/>
<dbReference type="VEuPathDB" id="HostDB:ENSG00000162944"/>
<dbReference type="eggNOG" id="ENOG502QVRY">
    <property type="taxonomic scope" value="Eukaryota"/>
</dbReference>
<dbReference type="GeneTree" id="ENSGT00530000063609"/>
<dbReference type="HOGENOM" id="CLU_025878_0_0_1"/>
<dbReference type="InParanoid" id="Q52LD8"/>
<dbReference type="OMA" id="SWTYQEG"/>
<dbReference type="OrthoDB" id="9942562at2759"/>
<dbReference type="PAN-GO" id="Q52LD8">
    <property type="GO annotations" value="0 GO annotations based on evolutionary models"/>
</dbReference>
<dbReference type="PhylomeDB" id="Q52LD8"/>
<dbReference type="TreeFam" id="TF333285"/>
<dbReference type="PathwayCommons" id="Q52LD8"/>
<dbReference type="SignaLink" id="Q52LD8"/>
<dbReference type="BioGRID-ORCS" id="130132">
    <property type="hits" value="9 hits in 1140 CRISPR screens"/>
</dbReference>
<dbReference type="ChiTaRS" id="RFTN2">
    <property type="organism name" value="human"/>
</dbReference>
<dbReference type="GenomeRNAi" id="130132"/>
<dbReference type="Pharos" id="Q52LD8">
    <property type="development level" value="Tdark"/>
</dbReference>
<dbReference type="PRO" id="PR:Q52LD8"/>
<dbReference type="Proteomes" id="UP000005640">
    <property type="component" value="Chromosome 2"/>
</dbReference>
<dbReference type="RNAct" id="Q52LD8">
    <property type="molecule type" value="protein"/>
</dbReference>
<dbReference type="Bgee" id="ENSG00000162944">
    <property type="expression patterns" value="Expressed in ventricular zone and 132 other cell types or tissues"/>
</dbReference>
<dbReference type="ExpressionAtlas" id="Q52LD8">
    <property type="expression patterns" value="baseline and differential"/>
</dbReference>
<dbReference type="GO" id="GO:0005886">
    <property type="term" value="C:plasma membrane"/>
    <property type="evidence" value="ECO:0007669"/>
    <property type="project" value="UniProtKB-SubCell"/>
</dbReference>
<dbReference type="GO" id="GO:0033227">
    <property type="term" value="P:dsRNA transport"/>
    <property type="evidence" value="ECO:0007669"/>
    <property type="project" value="Ensembl"/>
</dbReference>
<dbReference type="GO" id="GO:0043330">
    <property type="term" value="P:response to exogenous dsRNA"/>
    <property type="evidence" value="ECO:0007669"/>
    <property type="project" value="Ensembl"/>
</dbReference>
<dbReference type="InterPro" id="IPR028169">
    <property type="entry name" value="Raftlin"/>
</dbReference>
<dbReference type="PANTHER" id="PTHR17601:SF1">
    <property type="entry name" value="RAFTLIN-2"/>
    <property type="match status" value="1"/>
</dbReference>
<dbReference type="PANTHER" id="PTHR17601">
    <property type="entry name" value="RAFTLIN-RELATED"/>
    <property type="match status" value="1"/>
</dbReference>
<dbReference type="Pfam" id="PF15250">
    <property type="entry name" value="Raftlin"/>
    <property type="match status" value="1"/>
</dbReference>
<keyword id="KW-1003">Cell membrane</keyword>
<keyword id="KW-0449">Lipoprotein</keyword>
<keyword id="KW-0472">Membrane</keyword>
<keyword id="KW-0519">Myristate</keyword>
<keyword id="KW-0564">Palmitate</keyword>
<keyword id="KW-0597">Phosphoprotein</keyword>
<keyword id="KW-1267">Proteomics identification</keyword>
<keyword id="KW-1185">Reference proteome</keyword>
<feature type="initiator methionine" description="Removed">
    <location>
        <position position="1"/>
    </location>
</feature>
<feature type="chain" id="PRO_0000089338" description="Raftlin-2">
    <location>
        <begin position="2"/>
        <end position="501"/>
    </location>
</feature>
<feature type="region of interest" description="Disordered" evidence="4">
    <location>
        <begin position="1"/>
        <end position="20"/>
    </location>
</feature>
<feature type="region of interest" description="Disordered" evidence="4">
    <location>
        <begin position="196"/>
        <end position="239"/>
    </location>
</feature>
<feature type="region of interest" description="Disordered" evidence="4">
    <location>
        <begin position="407"/>
        <end position="449"/>
    </location>
</feature>
<feature type="compositionally biased region" description="Polar residues" evidence="4">
    <location>
        <begin position="220"/>
        <end position="233"/>
    </location>
</feature>
<feature type="compositionally biased region" description="Basic and acidic residues" evidence="4">
    <location>
        <begin position="410"/>
        <end position="425"/>
    </location>
</feature>
<feature type="compositionally biased region" description="Polar residues" evidence="4">
    <location>
        <begin position="427"/>
        <end position="441"/>
    </location>
</feature>
<feature type="modified residue" description="Phosphoserine" evidence="3">
    <location>
        <position position="405"/>
    </location>
</feature>
<feature type="modified residue" description="Phosphothreonine" evidence="3">
    <location>
        <position position="409"/>
    </location>
</feature>
<feature type="modified residue" description="Phosphoserine" evidence="3">
    <location>
        <position position="430"/>
    </location>
</feature>
<feature type="lipid moiety-binding region" description="N-myristoyl glycine" evidence="1">
    <location>
        <position position="2"/>
    </location>
</feature>
<feature type="lipid moiety-binding region" description="S-palmitoyl cysteine" evidence="1">
    <location>
        <position position="3"/>
    </location>
</feature>
<feature type="sequence conflict" description="In Ref. 1; BAB70861." evidence="5" ref="1">
    <original>R</original>
    <variation>H</variation>
    <location>
        <position position="416"/>
    </location>
</feature>